<keyword id="KW-0025">Alternative splicing</keyword>
<keyword id="KW-0963">Cytoplasm</keyword>
<keyword id="KW-0880">Kelch repeat</keyword>
<keyword id="KW-0469">Meiosis</keyword>
<keyword id="KW-1185">Reference proteome</keyword>
<keyword id="KW-0677">Repeat</keyword>
<keyword id="KW-0833">Ubl conjugation pathway</keyword>
<dbReference type="EMBL" id="BT020656">
    <property type="protein sequence ID" value="AAX08673.1"/>
    <property type="molecule type" value="mRNA"/>
</dbReference>
<dbReference type="EMBL" id="BT021774">
    <property type="protein sequence ID" value="AAX46621.1"/>
    <property type="molecule type" value="mRNA"/>
</dbReference>
<dbReference type="EMBL" id="BT021841">
    <property type="protein sequence ID" value="AAX46688.1"/>
    <property type="molecule type" value="mRNA"/>
</dbReference>
<dbReference type="EMBL" id="BC103002">
    <property type="protein sequence ID" value="AAI03003.1"/>
    <property type="molecule type" value="mRNA"/>
</dbReference>
<dbReference type="RefSeq" id="NP_001014966.1">
    <molecule id="Q58CV6-1"/>
    <property type="nucleotide sequence ID" value="NM_001014966.1"/>
</dbReference>
<dbReference type="SMR" id="Q58CV6"/>
<dbReference type="FunCoup" id="Q58CV6">
    <property type="interactions" value="2163"/>
</dbReference>
<dbReference type="STRING" id="9913.ENSBTAP00000016944"/>
<dbReference type="PaxDb" id="9913-ENSBTAP00000016944"/>
<dbReference type="Ensembl" id="ENSBTAT00000016943.5">
    <molecule id="Q58CV6-1"/>
    <property type="protein sequence ID" value="ENSBTAP00000016943.3"/>
    <property type="gene ID" value="ENSBTAG00000050696.2"/>
</dbReference>
<dbReference type="GeneID" id="541138"/>
<dbReference type="KEGG" id="bta:541138"/>
<dbReference type="CTD" id="116138"/>
<dbReference type="VEuPathDB" id="HostDB:ENSBTAG00000050696"/>
<dbReference type="eggNOG" id="KOG3190">
    <property type="taxonomic scope" value="Eukaryota"/>
</dbReference>
<dbReference type="eggNOG" id="KOG4693">
    <property type="taxonomic scope" value="Eukaryota"/>
</dbReference>
<dbReference type="GeneTree" id="ENSGT00940000157952"/>
<dbReference type="HOGENOM" id="CLU_045453_0_0_1"/>
<dbReference type="InParanoid" id="Q58CV6"/>
<dbReference type="OMA" id="SQETYVF"/>
<dbReference type="OrthoDB" id="432528at2759"/>
<dbReference type="UniPathway" id="UPA00143"/>
<dbReference type="Proteomes" id="UP000009136">
    <property type="component" value="Chromosome 23"/>
</dbReference>
<dbReference type="Bgee" id="ENSBTAG00000050696">
    <property type="expression patterns" value="Expressed in spermatid and 106 other cell types or tissues"/>
</dbReference>
<dbReference type="GO" id="GO:0031462">
    <property type="term" value="C:Cul2-RING ubiquitin ligase complex"/>
    <property type="evidence" value="ECO:0000250"/>
    <property type="project" value="UniProtKB"/>
</dbReference>
<dbReference type="GO" id="GO:0005737">
    <property type="term" value="C:cytoplasm"/>
    <property type="evidence" value="ECO:0000318"/>
    <property type="project" value="GO_Central"/>
</dbReference>
<dbReference type="GO" id="GO:0003682">
    <property type="term" value="F:chromatin binding"/>
    <property type="evidence" value="ECO:0000318"/>
    <property type="project" value="GO_Central"/>
</dbReference>
<dbReference type="GO" id="GO:1990756">
    <property type="term" value="F:ubiquitin-like ligase-substrate adaptor activity"/>
    <property type="evidence" value="ECO:0000250"/>
    <property type="project" value="UniProtKB"/>
</dbReference>
<dbReference type="GO" id="GO:0051321">
    <property type="term" value="P:meiotic cell cycle"/>
    <property type="evidence" value="ECO:0007669"/>
    <property type="project" value="UniProtKB-KW"/>
</dbReference>
<dbReference type="GO" id="GO:0043161">
    <property type="term" value="P:proteasome-mediated ubiquitin-dependent protein catabolic process"/>
    <property type="evidence" value="ECO:0000250"/>
    <property type="project" value="UniProtKB"/>
</dbReference>
<dbReference type="GO" id="GO:0016567">
    <property type="term" value="P:protein ubiquitination"/>
    <property type="evidence" value="ECO:0007669"/>
    <property type="project" value="UniProtKB-UniPathway"/>
</dbReference>
<dbReference type="FunFam" id="2.120.10.80:FF:000074">
    <property type="entry name" value="Kelch domain containing 3"/>
    <property type="match status" value="1"/>
</dbReference>
<dbReference type="FunFam" id="2.120.10.80:FF:000136">
    <property type="entry name" value="Kelch domain containing 3"/>
    <property type="match status" value="1"/>
</dbReference>
<dbReference type="Gene3D" id="2.120.10.80">
    <property type="entry name" value="Kelch-type beta propeller"/>
    <property type="match status" value="2"/>
</dbReference>
<dbReference type="InterPro" id="IPR015915">
    <property type="entry name" value="Kelch-typ_b-propeller"/>
</dbReference>
<dbReference type="InterPro" id="IPR052637">
    <property type="entry name" value="KLHDC3-like"/>
</dbReference>
<dbReference type="PANTHER" id="PTHR46461">
    <property type="entry name" value="KELCH DOMAIN-CONTAINING PROTEIN 3"/>
    <property type="match status" value="1"/>
</dbReference>
<dbReference type="PANTHER" id="PTHR46461:SF1">
    <property type="entry name" value="KELCH DOMAIN-CONTAINING PROTEIN 3"/>
    <property type="match status" value="1"/>
</dbReference>
<dbReference type="Pfam" id="PF13964">
    <property type="entry name" value="Kelch_6"/>
    <property type="match status" value="1"/>
</dbReference>
<dbReference type="Pfam" id="PF24681">
    <property type="entry name" value="Kelch_KLHDC2_KLHL20_DRC7"/>
    <property type="match status" value="1"/>
</dbReference>
<dbReference type="SUPFAM" id="SSF117281">
    <property type="entry name" value="Kelch motif"/>
    <property type="match status" value="2"/>
</dbReference>
<protein>
    <recommendedName>
        <fullName evidence="1">Kelch domain-containing protein 3</fullName>
    </recommendedName>
</protein>
<accession>Q58CV6</accession>
<accession>Q5EAB3</accession>
<evidence type="ECO:0000250" key="1">
    <source>
        <dbReference type="UniProtKB" id="Q9BQ90"/>
    </source>
</evidence>
<evidence type="ECO:0000303" key="2">
    <source>
    </source>
</evidence>
<organism>
    <name type="scientific">Bos taurus</name>
    <name type="common">Bovine</name>
    <dbReference type="NCBI Taxonomy" id="9913"/>
    <lineage>
        <taxon>Eukaryota</taxon>
        <taxon>Metazoa</taxon>
        <taxon>Chordata</taxon>
        <taxon>Craniata</taxon>
        <taxon>Vertebrata</taxon>
        <taxon>Euteleostomi</taxon>
        <taxon>Mammalia</taxon>
        <taxon>Eutheria</taxon>
        <taxon>Laurasiatheria</taxon>
        <taxon>Artiodactyla</taxon>
        <taxon>Ruminantia</taxon>
        <taxon>Pecora</taxon>
        <taxon>Bovidae</taxon>
        <taxon>Bovinae</taxon>
        <taxon>Bos</taxon>
    </lineage>
</organism>
<reference key="1">
    <citation type="journal article" date="2005" name="BMC Genomics">
        <title>Characterization of 954 bovine full-CDS cDNA sequences.</title>
        <authorList>
            <person name="Harhay G.P."/>
            <person name="Sonstegard T.S."/>
            <person name="Keele J.W."/>
            <person name="Heaton M.P."/>
            <person name="Clawson M.L."/>
            <person name="Snelling W.M."/>
            <person name="Wiedmann R.T."/>
            <person name="Van Tassell C.P."/>
            <person name="Smith T.P.L."/>
        </authorList>
    </citation>
    <scope>NUCLEOTIDE SEQUENCE [LARGE SCALE MRNA] (ISOFORMS 1 AND 2)</scope>
</reference>
<reference key="2">
    <citation type="submission" date="2005-08" db="EMBL/GenBank/DDBJ databases">
        <authorList>
            <consortium name="NIH - Mammalian Gene Collection (MGC) project"/>
        </authorList>
    </citation>
    <scope>NUCLEOTIDE SEQUENCE [LARGE SCALE MRNA] (ISOFORM 1)</scope>
    <source>
        <strain>Hereford</strain>
        <tissue>Thymus</tissue>
    </source>
</reference>
<gene>
    <name evidence="1" type="primary">KLHDC3</name>
</gene>
<sequence length="382" mass="43058">MLRWTVHLEGGPRRVNHAAVAVGHRVYSFGGYCSGEDYETLRQIDVHIFNAVSLRWTKLPPVRPAARGQAPVVPYMRYGHSTVLIDDTVFLWGGRNDTEGACNVLYAFDVNTHKWSTPRVSGTVPGARDGHSACVLGKTMYIFGGYEQLADCFSNDIHKLDTSTMTWTLICTKGNPARWRDFHSATMLGSHMYVFGGRADRFGPFHSNNEIYCNRIRVFDTRTEAWLDCPPTPVLPEGRRSHSAFGYNGELYIFGGYNARLNRHFHDLWKFNPVSFTWKKIEPKGKGPCPRRRQCCCIVGDKIVLFGGTSPSPEEGLGDEFDLIDHSDLHILDFSPSLKTLCKLAVIQYNLDQSCLPHDIRWELNAMTTNSNISRPIVSSHG</sequence>
<proteinExistence type="evidence at transcript level"/>
<feature type="chain" id="PRO_0000237571" description="Kelch domain-containing protein 3">
    <location>
        <begin position="1"/>
        <end position="382"/>
    </location>
</feature>
<feature type="repeat" description="Kelch 1">
    <location>
        <begin position="25"/>
        <end position="77"/>
    </location>
</feature>
<feature type="repeat" description="Kelch 2">
    <location>
        <begin position="88"/>
        <end position="138"/>
    </location>
</feature>
<feature type="repeat" description="Kelch 3">
    <location>
        <begin position="139"/>
        <end position="189"/>
    </location>
</feature>
<feature type="repeat" description="Kelch 4">
    <location>
        <begin position="191"/>
        <end position="249"/>
    </location>
</feature>
<feature type="repeat" description="Kelch 5">
    <location>
        <begin position="251"/>
        <end position="301"/>
    </location>
</feature>
<feature type="splice variant" id="VSP_024354" description="In isoform 2." evidence="2">
    <original>WELNAMTTNSNISRPIVSSHG</original>
    <variation>YSEWLEGRD</variation>
    <location>
        <begin position="362"/>
        <end position="382"/>
    </location>
</feature>
<comment type="function">
    <text evidence="1">Substrate-recognition component of a Cul2-RING (CRL2) E3 ubiquitin-protein ligase complex of the DesCEND (destruction via C-end degrons) pathway, which recognizes a C-degron located at the extreme C terminus of target proteins, leading to their ubiquitination and degradation. The C-degron recognized by the DesCEND pathway is usually a motif of less than ten residues and can be present in full-length proteins, truncated proteins or proteolytically cleaved forms. The CRL2(KLHDC3) complex specifically recognizes proteins with a glycine (Gly) at the C-terminus, leading to their ubiquitination and degradation: recognizes the C-terminal -Arg-(Xaa)n-Arg-Gly, -Arg-(Xaa)n-Lys-Gly, and -Arg-(Xaa)n-Gln-Gly degrons. The CRL2(KLHDC3) complex mediates ubiquitination and degradation of truncated SELENOV and SEPHS2 selenoproteins produced by failed UGA/Sec decoding, which end with a glycine. May be involved in meiotic recombination process.</text>
</comment>
<comment type="pathway">
    <text evidence="1">Protein modification; protein ubiquitination.</text>
</comment>
<comment type="subunit">
    <text evidence="1">Component of a CRL2(KLHDC3) complex, also named ECS(KLHDC3) complex, composed of CUL2, Elongin BC (ELOB and ELOC), RBX1 and substrate-specific adapter KLHDC3 (By similarity). May form oligomers as a KLHDC3-ELOB-ELOC complex; this interaction is likely autoinhibitory for the E3 ligase complex (By similarity).</text>
</comment>
<comment type="subcellular location">
    <subcellularLocation>
        <location evidence="1">Cytoplasm</location>
    </subcellularLocation>
</comment>
<comment type="alternative products">
    <event type="alternative splicing"/>
    <isoform>
        <id>Q58CV6-1</id>
        <name>1</name>
        <sequence type="displayed"/>
    </isoform>
    <isoform>
        <id>Q58CV6-2</id>
        <name>2</name>
        <sequence type="described" ref="VSP_024354"/>
    </isoform>
</comment>
<name>KLDC3_BOVIN</name>